<accession>Q824C8</accession>
<feature type="chain" id="PRO_0000234965" description="Serine hydroxymethyltransferase">
    <location>
        <begin position="1"/>
        <end position="497"/>
    </location>
</feature>
<feature type="binding site" evidence="1">
    <location>
        <position position="176"/>
    </location>
    <ligand>
        <name>(6S)-5,6,7,8-tetrahydrofolate</name>
        <dbReference type="ChEBI" id="CHEBI:57453"/>
    </ligand>
</feature>
<feature type="binding site" evidence="1">
    <location>
        <begin position="180"/>
        <end position="182"/>
    </location>
    <ligand>
        <name>(6S)-5,6,7,8-tetrahydrofolate</name>
        <dbReference type="ChEBI" id="CHEBI:57453"/>
    </ligand>
</feature>
<feature type="site" description="Plays an important role in substrate specificity" evidence="1">
    <location>
        <position position="288"/>
    </location>
</feature>
<feature type="modified residue" description="N6-(pyridoxal phosphate)lysine" evidence="1">
    <location>
        <position position="289"/>
    </location>
</feature>
<reference key="1">
    <citation type="journal article" date="2003" name="Nucleic Acids Res.">
        <title>Genome sequence of Chlamydophila caviae (Chlamydia psittaci GPIC): examining the role of niche-specific genes in the evolution of the Chlamydiaceae.</title>
        <authorList>
            <person name="Read T.D."/>
            <person name="Myers G.S.A."/>
            <person name="Brunham R.C."/>
            <person name="Nelson W.C."/>
            <person name="Paulsen I.T."/>
            <person name="Heidelberg J.F."/>
            <person name="Holtzapple E.K."/>
            <person name="Khouri H.M."/>
            <person name="Federova N.B."/>
            <person name="Carty H.A."/>
            <person name="Umayam L.A."/>
            <person name="Haft D.H."/>
            <person name="Peterson J.D."/>
            <person name="Beanan M.J."/>
            <person name="White O."/>
            <person name="Salzberg S.L."/>
            <person name="Hsia R.-C."/>
            <person name="McClarty G."/>
            <person name="Rank R.G."/>
            <person name="Bavoil P.M."/>
            <person name="Fraser C.M."/>
        </authorList>
    </citation>
    <scope>NUCLEOTIDE SEQUENCE [LARGE SCALE GENOMIC DNA]</scope>
    <source>
        <strain>ATCC VR-813 / DSM 19441 / 03DC25 / GPIC</strain>
    </source>
</reference>
<sequence length="497" mass="54205">MASLLHKFLENASGKKGQDLASTAYLAALDHLLHSFPSIGKSVIDELKGQRSRLKMIASENYASISVQLAMGNLLTDKYCEGSPFKRFYSCCENVDAIEWECAETAKELFGAESAFVQPHSGADANLLAMMAIITQKIQGPAVKRLGYKTINDLTDKEYAELKAEIGSHVCLGPSLNSGGHLTHGTVRMNVMSKLMRCLPYEVNKKTERFDYAEIARLVRTHKPTVLVAGYSSYSRRLNFSTLKQIADDCGAVLWVDMAHFAGLVAGGVFVEEENPIPFADIVTTTTHKTLRGPRGGLVLASKEYDGIINRACPLMMGGPLPHVIAAKAVALKEALTVDFKKYAHQVVDNARTLAEHFQKQGLRLLTGGTDNHMLIIDLTSLGISGRIAEDILSSIGIAVNRNTIPSDAVGKWDTSGIRLGTPALTTLGMGSDEMEEVANIIVKVLRNITLRRNADDSFSKSEGELPENIAQEARARVADLLSRFPLYPEIDLETLV</sequence>
<dbReference type="EC" id="2.1.2.1" evidence="1"/>
<dbReference type="EMBL" id="AE015925">
    <property type="protein sequence ID" value="AAP04975.1"/>
    <property type="molecule type" value="Genomic_DNA"/>
</dbReference>
<dbReference type="RefSeq" id="WP_011006193.1">
    <property type="nucleotide sequence ID" value="NC_003361.3"/>
</dbReference>
<dbReference type="SMR" id="Q824C8"/>
<dbReference type="STRING" id="227941.CCA_00224"/>
<dbReference type="KEGG" id="cca:CCA_00224"/>
<dbReference type="eggNOG" id="COG0112">
    <property type="taxonomic scope" value="Bacteria"/>
</dbReference>
<dbReference type="HOGENOM" id="CLU_022477_2_1_0"/>
<dbReference type="OrthoDB" id="9803846at2"/>
<dbReference type="UniPathway" id="UPA00193"/>
<dbReference type="UniPathway" id="UPA00288">
    <property type="reaction ID" value="UER01023"/>
</dbReference>
<dbReference type="Proteomes" id="UP000002193">
    <property type="component" value="Chromosome"/>
</dbReference>
<dbReference type="GO" id="GO:0005829">
    <property type="term" value="C:cytosol"/>
    <property type="evidence" value="ECO:0007669"/>
    <property type="project" value="TreeGrafter"/>
</dbReference>
<dbReference type="GO" id="GO:0004372">
    <property type="term" value="F:glycine hydroxymethyltransferase activity"/>
    <property type="evidence" value="ECO:0007669"/>
    <property type="project" value="UniProtKB-UniRule"/>
</dbReference>
<dbReference type="GO" id="GO:0030170">
    <property type="term" value="F:pyridoxal phosphate binding"/>
    <property type="evidence" value="ECO:0007669"/>
    <property type="project" value="UniProtKB-UniRule"/>
</dbReference>
<dbReference type="GO" id="GO:0019264">
    <property type="term" value="P:glycine biosynthetic process from serine"/>
    <property type="evidence" value="ECO:0007669"/>
    <property type="project" value="UniProtKB-UniRule"/>
</dbReference>
<dbReference type="GO" id="GO:0035999">
    <property type="term" value="P:tetrahydrofolate interconversion"/>
    <property type="evidence" value="ECO:0007669"/>
    <property type="project" value="UniProtKB-UniRule"/>
</dbReference>
<dbReference type="CDD" id="cd00378">
    <property type="entry name" value="SHMT"/>
    <property type="match status" value="1"/>
</dbReference>
<dbReference type="FunFam" id="3.40.640.10:FF:000060">
    <property type="entry name" value="Serine hydroxymethyltransferase"/>
    <property type="match status" value="1"/>
</dbReference>
<dbReference type="Gene3D" id="3.90.1150.10">
    <property type="entry name" value="Aspartate Aminotransferase, domain 1"/>
    <property type="match status" value="1"/>
</dbReference>
<dbReference type="Gene3D" id="3.40.640.10">
    <property type="entry name" value="Type I PLP-dependent aspartate aminotransferase-like (Major domain)"/>
    <property type="match status" value="1"/>
</dbReference>
<dbReference type="HAMAP" id="MF_00051">
    <property type="entry name" value="SHMT"/>
    <property type="match status" value="1"/>
</dbReference>
<dbReference type="InterPro" id="IPR015424">
    <property type="entry name" value="PyrdxlP-dep_Trfase"/>
</dbReference>
<dbReference type="InterPro" id="IPR015421">
    <property type="entry name" value="PyrdxlP-dep_Trfase_major"/>
</dbReference>
<dbReference type="InterPro" id="IPR015422">
    <property type="entry name" value="PyrdxlP-dep_Trfase_small"/>
</dbReference>
<dbReference type="InterPro" id="IPR001085">
    <property type="entry name" value="Ser_HO-MeTrfase"/>
</dbReference>
<dbReference type="InterPro" id="IPR049943">
    <property type="entry name" value="Ser_HO-MeTrfase-like"/>
</dbReference>
<dbReference type="InterPro" id="IPR019798">
    <property type="entry name" value="Ser_HO-MeTrfase_PLP_BS"/>
</dbReference>
<dbReference type="InterPro" id="IPR039429">
    <property type="entry name" value="SHMT-like_dom"/>
</dbReference>
<dbReference type="NCBIfam" id="NF000586">
    <property type="entry name" value="PRK00011.1"/>
    <property type="match status" value="1"/>
</dbReference>
<dbReference type="NCBIfam" id="NF010094">
    <property type="entry name" value="PRK13580.1"/>
    <property type="match status" value="1"/>
</dbReference>
<dbReference type="PANTHER" id="PTHR11680">
    <property type="entry name" value="SERINE HYDROXYMETHYLTRANSFERASE"/>
    <property type="match status" value="1"/>
</dbReference>
<dbReference type="PANTHER" id="PTHR11680:SF35">
    <property type="entry name" value="SERINE HYDROXYMETHYLTRANSFERASE 1"/>
    <property type="match status" value="1"/>
</dbReference>
<dbReference type="Pfam" id="PF00464">
    <property type="entry name" value="SHMT"/>
    <property type="match status" value="2"/>
</dbReference>
<dbReference type="PIRSF" id="PIRSF000412">
    <property type="entry name" value="SHMT"/>
    <property type="match status" value="1"/>
</dbReference>
<dbReference type="SUPFAM" id="SSF53383">
    <property type="entry name" value="PLP-dependent transferases"/>
    <property type="match status" value="1"/>
</dbReference>
<dbReference type="PROSITE" id="PS00096">
    <property type="entry name" value="SHMT"/>
    <property type="match status" value="1"/>
</dbReference>
<protein>
    <recommendedName>
        <fullName evidence="1">Serine hydroxymethyltransferase</fullName>
        <shortName evidence="1">SHMT</shortName>
        <shortName evidence="1">Serine methylase</shortName>
        <ecNumber evidence="1">2.1.2.1</ecNumber>
    </recommendedName>
</protein>
<name>GLYA_CHLCV</name>
<proteinExistence type="inferred from homology"/>
<comment type="function">
    <text evidence="1">Catalyzes the reversible interconversion of serine and glycine with tetrahydrofolate (THF) serving as the one-carbon carrier. This reaction serves as the major source of one-carbon groups required for the biosynthesis of purines, thymidylate, methionine, and other important biomolecules. Also exhibits THF-independent aldolase activity toward beta-hydroxyamino acids, producing glycine and aldehydes, via a retro-aldol mechanism.</text>
</comment>
<comment type="catalytic activity">
    <reaction evidence="1">
        <text>(6R)-5,10-methylene-5,6,7,8-tetrahydrofolate + glycine + H2O = (6S)-5,6,7,8-tetrahydrofolate + L-serine</text>
        <dbReference type="Rhea" id="RHEA:15481"/>
        <dbReference type="ChEBI" id="CHEBI:15377"/>
        <dbReference type="ChEBI" id="CHEBI:15636"/>
        <dbReference type="ChEBI" id="CHEBI:33384"/>
        <dbReference type="ChEBI" id="CHEBI:57305"/>
        <dbReference type="ChEBI" id="CHEBI:57453"/>
        <dbReference type="EC" id="2.1.2.1"/>
    </reaction>
</comment>
<comment type="cofactor">
    <cofactor evidence="1">
        <name>pyridoxal 5'-phosphate</name>
        <dbReference type="ChEBI" id="CHEBI:597326"/>
    </cofactor>
</comment>
<comment type="pathway">
    <text evidence="1">One-carbon metabolism; tetrahydrofolate interconversion.</text>
</comment>
<comment type="pathway">
    <text evidence="1">Amino-acid biosynthesis; glycine biosynthesis; glycine from L-serine: step 1/1.</text>
</comment>
<comment type="subunit">
    <text evidence="1">Homodimer.</text>
</comment>
<comment type="subcellular location">
    <subcellularLocation>
        <location evidence="1">Cytoplasm</location>
    </subcellularLocation>
</comment>
<comment type="similarity">
    <text evidence="1">Belongs to the SHMT family.</text>
</comment>
<gene>
    <name evidence="1" type="primary">glyA</name>
    <name type="ordered locus">CCA_00224</name>
</gene>
<keyword id="KW-0028">Amino-acid biosynthesis</keyword>
<keyword id="KW-0963">Cytoplasm</keyword>
<keyword id="KW-0554">One-carbon metabolism</keyword>
<keyword id="KW-0663">Pyridoxal phosphate</keyword>
<keyword id="KW-0808">Transferase</keyword>
<organism>
    <name type="scientific">Chlamydia caviae (strain ATCC VR-813 / DSM 19441 / 03DC25 / GPIC)</name>
    <name type="common">Chlamydophila caviae</name>
    <dbReference type="NCBI Taxonomy" id="227941"/>
    <lineage>
        <taxon>Bacteria</taxon>
        <taxon>Pseudomonadati</taxon>
        <taxon>Chlamydiota</taxon>
        <taxon>Chlamydiia</taxon>
        <taxon>Chlamydiales</taxon>
        <taxon>Chlamydiaceae</taxon>
        <taxon>Chlamydia/Chlamydophila group</taxon>
        <taxon>Chlamydia</taxon>
    </lineage>
</organism>
<evidence type="ECO:0000255" key="1">
    <source>
        <dbReference type="HAMAP-Rule" id="MF_00051"/>
    </source>
</evidence>